<reference key="1">
    <citation type="journal article" date="2009" name="Proc. Natl. Acad. Sci. U.S.A.">
        <title>Hamiltonella defensa, genome evolution of protective bacterial endosymbiont from pathogenic ancestors.</title>
        <authorList>
            <person name="Degnan P.H."/>
            <person name="Yu Y."/>
            <person name="Sisneros N."/>
            <person name="Wing R.A."/>
            <person name="Moran N.A."/>
        </authorList>
    </citation>
    <scope>NUCLEOTIDE SEQUENCE [LARGE SCALE GENOMIC DNA]</scope>
    <source>
        <strain>5AT</strain>
    </source>
</reference>
<feature type="chain" id="PRO_1000215913" description="5'-methylthioadenosine/S-adenosylhomocysteine nucleosidase">
    <location>
        <begin position="1"/>
        <end position="237"/>
    </location>
</feature>
<feature type="active site" description="Proton acceptor" evidence="1">
    <location>
        <position position="12"/>
    </location>
</feature>
<feature type="active site" description="Proton donor" evidence="1">
    <location>
        <position position="197"/>
    </location>
</feature>
<feature type="binding site" evidence="1">
    <location>
        <position position="78"/>
    </location>
    <ligand>
        <name>substrate</name>
    </ligand>
</feature>
<feature type="binding site" evidence="1">
    <location>
        <position position="152"/>
    </location>
    <ligand>
        <name>substrate</name>
    </ligand>
</feature>
<feature type="binding site" evidence="1">
    <location>
        <begin position="173"/>
        <end position="174"/>
    </location>
    <ligand>
        <name>substrate</name>
    </ligand>
</feature>
<dbReference type="EC" id="3.2.2.9" evidence="1"/>
<dbReference type="EMBL" id="CP001277">
    <property type="protein sequence ID" value="ACQ68114.1"/>
    <property type="molecule type" value="Genomic_DNA"/>
</dbReference>
<dbReference type="RefSeq" id="WP_015873882.1">
    <property type="nucleotide sequence ID" value="NC_012751.1"/>
</dbReference>
<dbReference type="SMR" id="C4K6C1"/>
<dbReference type="STRING" id="572265.HDEF_1490"/>
<dbReference type="GeneID" id="66261141"/>
<dbReference type="KEGG" id="hde:HDEF_1490"/>
<dbReference type="eggNOG" id="COG0775">
    <property type="taxonomic scope" value="Bacteria"/>
</dbReference>
<dbReference type="HOGENOM" id="CLU_031248_2_2_6"/>
<dbReference type="UniPathway" id="UPA00904">
    <property type="reaction ID" value="UER00871"/>
</dbReference>
<dbReference type="Proteomes" id="UP000002334">
    <property type="component" value="Chromosome"/>
</dbReference>
<dbReference type="GO" id="GO:0005829">
    <property type="term" value="C:cytosol"/>
    <property type="evidence" value="ECO:0007669"/>
    <property type="project" value="TreeGrafter"/>
</dbReference>
<dbReference type="GO" id="GO:0008782">
    <property type="term" value="F:adenosylhomocysteine nucleosidase activity"/>
    <property type="evidence" value="ECO:0007669"/>
    <property type="project" value="UniProtKB-UniRule"/>
</dbReference>
<dbReference type="GO" id="GO:0008930">
    <property type="term" value="F:methylthioadenosine nucleosidase activity"/>
    <property type="evidence" value="ECO:0007669"/>
    <property type="project" value="UniProtKB-UniRule"/>
</dbReference>
<dbReference type="GO" id="GO:0019509">
    <property type="term" value="P:L-methionine salvage from methylthioadenosine"/>
    <property type="evidence" value="ECO:0007669"/>
    <property type="project" value="UniProtKB-UniRule"/>
</dbReference>
<dbReference type="GO" id="GO:0019284">
    <property type="term" value="P:L-methionine salvage from S-adenosylmethionine"/>
    <property type="evidence" value="ECO:0007669"/>
    <property type="project" value="TreeGrafter"/>
</dbReference>
<dbReference type="GO" id="GO:0046124">
    <property type="term" value="P:purine deoxyribonucleoside catabolic process"/>
    <property type="evidence" value="ECO:0007669"/>
    <property type="project" value="UniProtKB-UniRule"/>
</dbReference>
<dbReference type="CDD" id="cd09008">
    <property type="entry name" value="MTAN"/>
    <property type="match status" value="1"/>
</dbReference>
<dbReference type="FunFam" id="3.40.50.1580:FF:000001">
    <property type="entry name" value="MTA/SAH nucleosidase family protein"/>
    <property type="match status" value="1"/>
</dbReference>
<dbReference type="Gene3D" id="3.40.50.1580">
    <property type="entry name" value="Nucleoside phosphorylase domain"/>
    <property type="match status" value="1"/>
</dbReference>
<dbReference type="HAMAP" id="MF_01684">
    <property type="entry name" value="Salvage_MtnN"/>
    <property type="match status" value="1"/>
</dbReference>
<dbReference type="InterPro" id="IPR010049">
    <property type="entry name" value="MTA_SAH_Nsdase"/>
</dbReference>
<dbReference type="InterPro" id="IPR000845">
    <property type="entry name" value="Nucleoside_phosphorylase_d"/>
</dbReference>
<dbReference type="InterPro" id="IPR035994">
    <property type="entry name" value="Nucleoside_phosphorylase_sf"/>
</dbReference>
<dbReference type="NCBIfam" id="TIGR01704">
    <property type="entry name" value="MTA_SAH-Nsdase"/>
    <property type="match status" value="1"/>
</dbReference>
<dbReference type="NCBIfam" id="NF004079">
    <property type="entry name" value="PRK05584.1"/>
    <property type="match status" value="1"/>
</dbReference>
<dbReference type="PANTHER" id="PTHR46832">
    <property type="entry name" value="5'-METHYLTHIOADENOSINE/S-ADENOSYLHOMOCYSTEINE NUCLEOSIDASE"/>
    <property type="match status" value="1"/>
</dbReference>
<dbReference type="PANTHER" id="PTHR46832:SF1">
    <property type="entry name" value="5'-METHYLTHIOADENOSINE_S-ADENOSYLHOMOCYSTEINE NUCLEOSIDASE"/>
    <property type="match status" value="1"/>
</dbReference>
<dbReference type="Pfam" id="PF01048">
    <property type="entry name" value="PNP_UDP_1"/>
    <property type="match status" value="1"/>
</dbReference>
<dbReference type="SUPFAM" id="SSF53167">
    <property type="entry name" value="Purine and uridine phosphorylases"/>
    <property type="match status" value="1"/>
</dbReference>
<gene>
    <name evidence="1" type="primary">mtnN</name>
    <name type="ordered locus">HDEF_1490</name>
</gene>
<sequence>MKVGIIGAMKEEVTLLCQKIQSCQTLTRAGCSIYSGFLGETNVVLLQSGIGKTSAALGTTLLLEYFQPDILINTGSAAGLWPDLKIGDIVISTEVRYHDVNVTAFGYEWGQMALCPPAFFADKKLIEIVLECVKNLNLNAVQGLICSGDAFINGDQALDRIRTFFPKAVAVEMEAAAIAQVCHQFETPFVVIRAISDVADQASHLSFEQFLCIAAQRSSTVIENMLPILAETYCSIN</sequence>
<proteinExistence type="inferred from homology"/>
<name>MTNN_HAMD5</name>
<organism>
    <name type="scientific">Hamiltonella defensa subsp. Acyrthosiphon pisum (strain 5AT)</name>
    <dbReference type="NCBI Taxonomy" id="572265"/>
    <lineage>
        <taxon>Bacteria</taxon>
        <taxon>Pseudomonadati</taxon>
        <taxon>Pseudomonadota</taxon>
        <taxon>Gammaproteobacteria</taxon>
        <taxon>Enterobacterales</taxon>
        <taxon>Enterobacteriaceae</taxon>
        <taxon>aphid secondary symbionts</taxon>
        <taxon>Candidatus Hamiltonella</taxon>
    </lineage>
</organism>
<evidence type="ECO:0000255" key="1">
    <source>
        <dbReference type="HAMAP-Rule" id="MF_01684"/>
    </source>
</evidence>
<keyword id="KW-0028">Amino-acid biosynthesis</keyword>
<keyword id="KW-0378">Hydrolase</keyword>
<keyword id="KW-0486">Methionine biosynthesis</keyword>
<protein>
    <recommendedName>
        <fullName evidence="1">5'-methylthioadenosine/S-adenosylhomocysteine nucleosidase</fullName>
        <shortName evidence="1">MTA/SAH nucleosidase</shortName>
        <shortName evidence="1">MTAN</shortName>
        <ecNumber evidence="1">3.2.2.9</ecNumber>
    </recommendedName>
    <alternativeName>
        <fullName evidence="1">5'-deoxyadenosine nucleosidase</fullName>
        <shortName evidence="1">DOA nucleosidase</shortName>
        <shortName evidence="1">dAdo nucleosidase</shortName>
    </alternativeName>
    <alternativeName>
        <fullName evidence="1">5'-methylthioadenosine nucleosidase</fullName>
        <shortName evidence="1">MTA nucleosidase</shortName>
    </alternativeName>
    <alternativeName>
        <fullName evidence="1">S-adenosylhomocysteine nucleosidase</fullName>
        <shortName evidence="1">AdoHcy nucleosidase</shortName>
        <shortName evidence="1">SAH nucleosidase</shortName>
        <shortName evidence="1">SRH nucleosidase</shortName>
    </alternativeName>
</protein>
<comment type="function">
    <text evidence="1">Catalyzes the irreversible cleavage of the glycosidic bond in both 5'-methylthioadenosine (MTA) and S-adenosylhomocysteine (SAH/AdoHcy) to adenine and the corresponding thioribose, 5'-methylthioribose and S-ribosylhomocysteine, respectively. Also cleaves 5'-deoxyadenosine, a toxic by-product of radical S-adenosylmethionine (SAM) enzymes, into 5-deoxyribose and adenine. Thus, is required for in vivo function of the radical SAM enzymes biotin synthase and lipoic acid synthase, that are inhibited by 5'-deoxyadenosine accumulation.</text>
</comment>
<comment type="catalytic activity">
    <reaction evidence="1">
        <text>S-adenosyl-L-homocysteine + H2O = S-(5-deoxy-D-ribos-5-yl)-L-homocysteine + adenine</text>
        <dbReference type="Rhea" id="RHEA:17805"/>
        <dbReference type="ChEBI" id="CHEBI:15377"/>
        <dbReference type="ChEBI" id="CHEBI:16708"/>
        <dbReference type="ChEBI" id="CHEBI:57856"/>
        <dbReference type="ChEBI" id="CHEBI:58195"/>
        <dbReference type="EC" id="3.2.2.9"/>
    </reaction>
</comment>
<comment type="catalytic activity">
    <reaction evidence="1">
        <text>S-methyl-5'-thioadenosine + H2O = 5-(methylsulfanyl)-D-ribose + adenine</text>
        <dbReference type="Rhea" id="RHEA:13617"/>
        <dbReference type="ChEBI" id="CHEBI:15377"/>
        <dbReference type="ChEBI" id="CHEBI:16708"/>
        <dbReference type="ChEBI" id="CHEBI:17509"/>
        <dbReference type="ChEBI" id="CHEBI:78440"/>
        <dbReference type="EC" id="3.2.2.9"/>
    </reaction>
</comment>
<comment type="catalytic activity">
    <reaction evidence="1">
        <text>5'-deoxyadenosine + H2O = 5-deoxy-D-ribose + adenine</text>
        <dbReference type="Rhea" id="RHEA:29859"/>
        <dbReference type="ChEBI" id="CHEBI:15377"/>
        <dbReference type="ChEBI" id="CHEBI:16708"/>
        <dbReference type="ChEBI" id="CHEBI:17319"/>
        <dbReference type="ChEBI" id="CHEBI:149540"/>
        <dbReference type="EC" id="3.2.2.9"/>
    </reaction>
    <physiologicalReaction direction="left-to-right" evidence="1">
        <dbReference type="Rhea" id="RHEA:29860"/>
    </physiologicalReaction>
</comment>
<comment type="pathway">
    <text evidence="1">Amino-acid biosynthesis; L-methionine biosynthesis via salvage pathway; S-methyl-5-thio-alpha-D-ribose 1-phosphate from S-methyl-5'-thioadenosine (hydrolase route): step 1/2.</text>
</comment>
<comment type="subunit">
    <text evidence="1">Homodimer.</text>
</comment>
<comment type="similarity">
    <text evidence="1">Belongs to the PNP/UDP phosphorylase family. MtnN subfamily.</text>
</comment>
<accession>C4K6C1</accession>